<evidence type="ECO:0000250" key="1"/>
<evidence type="ECO:0000255" key="2"/>
<evidence type="ECO:0000305" key="3"/>
<keyword id="KW-0646">Protease inhibitor</keyword>
<keyword id="KW-1185">Reference proteome</keyword>
<keyword id="KW-0722">Serine protease inhibitor</keyword>
<accession>Q53KS9</accession>
<accession>A0A0P0Y0K3</accession>
<sequence>MEDDAGNCGGLTAFALRLAKRLADDGDNSNRNVVFSPVSLYAALALVASGARGTTLDELVALLGAASLDDLEESVRRAVEVGLADESESGGPRVSYACGVWHDERLALKPAYRAADFQRQPKSSRKKINKWVSKATNKLIREILPDGSVHGGTALVLVNAIYFKGKWSNPFPRERTTTGKFHRLDGSSVDAPFMSSREDQYIGFYDGFKVLKLPYHRTMKNHGDGGDITPAILKHYGENVGLSMYIFLPDARDGLPALVDKMAVASSGTASSSFLRDHRPGRRRIKVGDLRVPRFKVSFYSEMNEVLKGMGIGAAFDVGKVDLSGMIDGELVVVEKVMHRAVVEVNEEGTEAAAATACTMKFLCLTLTSPVDFVADHPFAFFVVEEKSDAVLFAGHVLDPTSLE</sequence>
<gene>
    <name type="ordered locus">Os11g0239200</name>
    <name type="ordered locus">LOC_Os11g13540</name>
    <name type="ORF">OsJ_032137</name>
</gene>
<protein>
    <recommendedName>
        <fullName>Serpin-Z2B</fullName>
    </recommendedName>
    <alternativeName>
        <fullName>OrysaZ2b</fullName>
    </alternativeName>
</protein>
<proteinExistence type="evidence at transcript level"/>
<name>SPZ2B_ORYSJ</name>
<reference key="1">
    <citation type="journal article" date="2005" name="BMC Biol.">
        <title>The sequence of rice chromosomes 11 and 12, rich in disease resistance genes and recent gene duplications.</title>
        <authorList>
            <consortium name="The rice chromosomes 11 and 12 sequencing consortia"/>
        </authorList>
    </citation>
    <scope>NUCLEOTIDE SEQUENCE [LARGE SCALE GENOMIC DNA]</scope>
    <source>
        <strain>cv. Nipponbare</strain>
    </source>
</reference>
<reference key="2">
    <citation type="journal article" date="2005" name="Nature">
        <title>The map-based sequence of the rice genome.</title>
        <authorList>
            <consortium name="International rice genome sequencing project (IRGSP)"/>
        </authorList>
    </citation>
    <scope>NUCLEOTIDE SEQUENCE [LARGE SCALE GENOMIC DNA]</scope>
    <source>
        <strain>cv. Nipponbare</strain>
    </source>
</reference>
<reference key="3">
    <citation type="journal article" date="2013" name="Rice">
        <title>Improvement of the Oryza sativa Nipponbare reference genome using next generation sequence and optical map data.</title>
        <authorList>
            <person name="Kawahara Y."/>
            <person name="de la Bastide M."/>
            <person name="Hamilton J.P."/>
            <person name="Kanamori H."/>
            <person name="McCombie W.R."/>
            <person name="Ouyang S."/>
            <person name="Schwartz D.C."/>
            <person name="Tanaka T."/>
            <person name="Wu J."/>
            <person name="Zhou S."/>
            <person name="Childs K.L."/>
            <person name="Davidson R.M."/>
            <person name="Lin H."/>
            <person name="Quesada-Ocampo L."/>
            <person name="Vaillancourt B."/>
            <person name="Sakai H."/>
            <person name="Lee S.S."/>
            <person name="Kim J."/>
            <person name="Numa H."/>
            <person name="Itoh T."/>
            <person name="Buell C.R."/>
            <person name="Matsumoto T."/>
        </authorList>
    </citation>
    <scope>GENOME REANNOTATION</scope>
    <source>
        <strain>cv. Nipponbare</strain>
    </source>
</reference>
<reference key="4">
    <citation type="journal article" date="2005" name="PLoS Biol.">
        <title>The genomes of Oryza sativa: a history of duplications.</title>
        <authorList>
            <person name="Yu J."/>
            <person name="Wang J."/>
            <person name="Lin W."/>
            <person name="Li S."/>
            <person name="Li H."/>
            <person name="Zhou J."/>
            <person name="Ni P."/>
            <person name="Dong W."/>
            <person name="Hu S."/>
            <person name="Zeng C."/>
            <person name="Zhang J."/>
            <person name="Zhang Y."/>
            <person name="Li R."/>
            <person name="Xu Z."/>
            <person name="Li S."/>
            <person name="Li X."/>
            <person name="Zheng H."/>
            <person name="Cong L."/>
            <person name="Lin L."/>
            <person name="Yin J."/>
            <person name="Geng J."/>
            <person name="Li G."/>
            <person name="Shi J."/>
            <person name="Liu J."/>
            <person name="Lv H."/>
            <person name="Li J."/>
            <person name="Wang J."/>
            <person name="Deng Y."/>
            <person name="Ran L."/>
            <person name="Shi X."/>
            <person name="Wang X."/>
            <person name="Wu Q."/>
            <person name="Li C."/>
            <person name="Ren X."/>
            <person name="Wang J."/>
            <person name="Wang X."/>
            <person name="Li D."/>
            <person name="Liu D."/>
            <person name="Zhang X."/>
            <person name="Ji Z."/>
            <person name="Zhao W."/>
            <person name="Sun Y."/>
            <person name="Zhang Z."/>
            <person name="Bao J."/>
            <person name="Han Y."/>
            <person name="Dong L."/>
            <person name="Ji J."/>
            <person name="Chen P."/>
            <person name="Wu S."/>
            <person name="Liu J."/>
            <person name="Xiao Y."/>
            <person name="Bu D."/>
            <person name="Tan J."/>
            <person name="Yang L."/>
            <person name="Ye C."/>
            <person name="Zhang J."/>
            <person name="Xu J."/>
            <person name="Zhou Y."/>
            <person name="Yu Y."/>
            <person name="Zhang B."/>
            <person name="Zhuang S."/>
            <person name="Wei H."/>
            <person name="Liu B."/>
            <person name="Lei M."/>
            <person name="Yu H."/>
            <person name="Li Y."/>
            <person name="Xu H."/>
            <person name="Wei S."/>
            <person name="He X."/>
            <person name="Fang L."/>
            <person name="Zhang Z."/>
            <person name="Zhang Y."/>
            <person name="Huang X."/>
            <person name="Su Z."/>
            <person name="Tong W."/>
            <person name="Li J."/>
            <person name="Tong Z."/>
            <person name="Li S."/>
            <person name="Ye J."/>
            <person name="Wang L."/>
            <person name="Fang L."/>
            <person name="Lei T."/>
            <person name="Chen C.-S."/>
            <person name="Chen H.-C."/>
            <person name="Xu Z."/>
            <person name="Li H."/>
            <person name="Huang H."/>
            <person name="Zhang F."/>
            <person name="Xu H."/>
            <person name="Li N."/>
            <person name="Zhao C."/>
            <person name="Li S."/>
            <person name="Dong L."/>
            <person name="Huang Y."/>
            <person name="Li L."/>
            <person name="Xi Y."/>
            <person name="Qi Q."/>
            <person name="Li W."/>
            <person name="Zhang B."/>
            <person name="Hu W."/>
            <person name="Zhang Y."/>
            <person name="Tian X."/>
            <person name="Jiao Y."/>
            <person name="Liang X."/>
            <person name="Jin J."/>
            <person name="Gao L."/>
            <person name="Zheng W."/>
            <person name="Hao B."/>
            <person name="Liu S.-M."/>
            <person name="Wang W."/>
            <person name="Yuan L."/>
            <person name="Cao M."/>
            <person name="McDermott J."/>
            <person name="Samudrala R."/>
            <person name="Wang J."/>
            <person name="Wong G.K.-S."/>
            <person name="Yang H."/>
        </authorList>
    </citation>
    <scope>NUCLEOTIDE SEQUENCE [LARGE SCALE GENOMIC DNA]</scope>
    <source>
        <strain>cv. Nipponbare</strain>
    </source>
</reference>
<reference key="5">
    <citation type="journal article" date="2008" name="Funct. Integr. Genomics">
        <title>Serpins in plants and green algae.</title>
        <authorList>
            <person name="Roberts T.H."/>
            <person name="Hejgaard J."/>
        </authorList>
    </citation>
    <scope>GENE FAMILY</scope>
    <scope>NOMENCLATURE</scope>
</reference>
<organism>
    <name type="scientific">Oryza sativa subsp. japonica</name>
    <name type="common">Rice</name>
    <dbReference type="NCBI Taxonomy" id="39947"/>
    <lineage>
        <taxon>Eukaryota</taxon>
        <taxon>Viridiplantae</taxon>
        <taxon>Streptophyta</taxon>
        <taxon>Embryophyta</taxon>
        <taxon>Tracheophyta</taxon>
        <taxon>Spermatophyta</taxon>
        <taxon>Magnoliopsida</taxon>
        <taxon>Liliopsida</taxon>
        <taxon>Poales</taxon>
        <taxon>Poaceae</taxon>
        <taxon>BOP clade</taxon>
        <taxon>Oryzoideae</taxon>
        <taxon>Oryzeae</taxon>
        <taxon>Oryzinae</taxon>
        <taxon>Oryza</taxon>
        <taxon>Oryza sativa</taxon>
    </lineage>
</organism>
<feature type="chain" id="PRO_0000334555" description="Serpin-Z2B">
    <location>
        <begin position="1"/>
        <end position="404"/>
    </location>
</feature>
<feature type="region of interest" description="RCL">
    <location>
        <begin position="349"/>
        <end position="373"/>
    </location>
</feature>
<feature type="site" description="Reactive bond" evidence="2">
    <location>
        <begin position="363"/>
        <end position="364"/>
    </location>
</feature>
<comment type="function">
    <text evidence="1">Probable serine protease inhibitor.</text>
</comment>
<comment type="domain">
    <text evidence="1">The reactive center loop (RCL) extends out from the body of the protein and directs binding to the target protease. The protease cleaves the serpin at the reactive site within the RCL, establishing a covalent linkage between the carboxyl group of the serpin reactive site and the serine hydroxyl of the protease. The resulting inactive serpin-protease complex is highly stable (By similarity).</text>
</comment>
<comment type="similarity">
    <text evidence="3">Belongs to the serpin family.</text>
</comment>
<dbReference type="EMBL" id="AC137993">
    <property type="protein sequence ID" value="AAX95890.1"/>
    <property type="molecule type" value="Genomic_DNA"/>
</dbReference>
<dbReference type="EMBL" id="AC145809">
    <property type="protein sequence ID" value="AAX92882.1"/>
    <property type="molecule type" value="Genomic_DNA"/>
</dbReference>
<dbReference type="EMBL" id="DP000010">
    <property type="protein sequence ID" value="ABA92263.1"/>
    <property type="molecule type" value="Genomic_DNA"/>
</dbReference>
<dbReference type="EMBL" id="AP014967">
    <property type="protein sequence ID" value="BAT13369.1"/>
    <property type="molecule type" value="Genomic_DNA"/>
</dbReference>
<dbReference type="EMBL" id="CM000148">
    <property type="protein sequence ID" value="EAZ17928.1"/>
    <property type="molecule type" value="Genomic_DNA"/>
</dbReference>
<dbReference type="SMR" id="Q53KS9"/>
<dbReference type="FunCoup" id="Q53KS9">
    <property type="interactions" value="283"/>
</dbReference>
<dbReference type="STRING" id="39947.Q53KS9"/>
<dbReference type="PaxDb" id="39947-Q53KS9"/>
<dbReference type="EnsemblPlants" id="Os11t0239200-00">
    <property type="protein sequence ID" value="Os11t0239200-00"/>
    <property type="gene ID" value="Os11g0239200"/>
</dbReference>
<dbReference type="GeneID" id="107275734"/>
<dbReference type="Gramene" id="Os11t0239200-00">
    <property type="protein sequence ID" value="Os11t0239200-00"/>
    <property type="gene ID" value="Os11g0239200"/>
</dbReference>
<dbReference type="KEGG" id="osa:107275734"/>
<dbReference type="eggNOG" id="KOG2392">
    <property type="taxonomic scope" value="Eukaryota"/>
</dbReference>
<dbReference type="HOGENOM" id="CLU_023330_4_2_1"/>
<dbReference type="InParanoid" id="Q53KS9"/>
<dbReference type="OMA" id="LMHQERK"/>
<dbReference type="OrthoDB" id="1063785at2759"/>
<dbReference type="Proteomes" id="UP000000763">
    <property type="component" value="Chromosome 11"/>
</dbReference>
<dbReference type="Proteomes" id="UP000007752">
    <property type="component" value="Chromosome 11"/>
</dbReference>
<dbReference type="Proteomes" id="UP000059680">
    <property type="component" value="Chromosome 11"/>
</dbReference>
<dbReference type="GO" id="GO:0005615">
    <property type="term" value="C:extracellular space"/>
    <property type="evidence" value="ECO:0000318"/>
    <property type="project" value="GO_Central"/>
</dbReference>
<dbReference type="GO" id="GO:0004867">
    <property type="term" value="F:serine-type endopeptidase inhibitor activity"/>
    <property type="evidence" value="ECO:0007669"/>
    <property type="project" value="UniProtKB-KW"/>
</dbReference>
<dbReference type="CDD" id="cd02043">
    <property type="entry name" value="serpinP_plants"/>
    <property type="match status" value="1"/>
</dbReference>
<dbReference type="Gene3D" id="2.30.39.10">
    <property type="entry name" value="Alpha-1-antitrypsin, domain 1"/>
    <property type="match status" value="1"/>
</dbReference>
<dbReference type="Gene3D" id="3.30.497.10">
    <property type="entry name" value="Antithrombin, subunit I, domain 2"/>
    <property type="match status" value="1"/>
</dbReference>
<dbReference type="InterPro" id="IPR023796">
    <property type="entry name" value="Serpin_dom"/>
</dbReference>
<dbReference type="InterPro" id="IPR000215">
    <property type="entry name" value="Serpin_fam"/>
</dbReference>
<dbReference type="InterPro" id="IPR036186">
    <property type="entry name" value="Serpin_sf"/>
</dbReference>
<dbReference type="InterPro" id="IPR042178">
    <property type="entry name" value="Serpin_sf_1"/>
</dbReference>
<dbReference type="InterPro" id="IPR042185">
    <property type="entry name" value="Serpin_sf_2"/>
</dbReference>
<dbReference type="PANTHER" id="PTHR11461">
    <property type="entry name" value="SERINE PROTEASE INHIBITOR, SERPIN"/>
    <property type="match status" value="1"/>
</dbReference>
<dbReference type="PANTHER" id="PTHR11461:SF209">
    <property type="entry name" value="SERPIN-Z8-RELATED"/>
    <property type="match status" value="1"/>
</dbReference>
<dbReference type="Pfam" id="PF00079">
    <property type="entry name" value="Serpin"/>
    <property type="match status" value="1"/>
</dbReference>
<dbReference type="SMART" id="SM00093">
    <property type="entry name" value="SERPIN"/>
    <property type="match status" value="1"/>
</dbReference>
<dbReference type="SUPFAM" id="SSF56574">
    <property type="entry name" value="Serpins"/>
    <property type="match status" value="1"/>
</dbReference>